<keyword id="KW-0027">Amidation</keyword>
<keyword id="KW-0165">Cleavage on pair of basic residues</keyword>
<keyword id="KW-0903">Direct protein sequencing</keyword>
<keyword id="KW-1015">Disulfide bond</keyword>
<keyword id="KW-0527">Neuropeptide</keyword>
<keyword id="KW-0964">Secreted</keyword>
<keyword id="KW-0732">Signal</keyword>
<dbReference type="EMBL" id="M29350">
    <property type="protein sequence ID" value="AAA27750.1"/>
    <property type="molecule type" value="Genomic_DNA"/>
</dbReference>
<dbReference type="EMBL" id="J01017">
    <property type="protein sequence ID" value="AAA27742.1"/>
    <property type="molecule type" value="Genomic_DNA"/>
</dbReference>
<dbReference type="PIR" id="A01630">
    <property type="entry name" value="GOGAAA"/>
</dbReference>
<dbReference type="Proteomes" id="UP000694888">
    <property type="component" value="Unplaced"/>
</dbReference>
<dbReference type="GO" id="GO:0005576">
    <property type="term" value="C:extracellular region"/>
    <property type="evidence" value="ECO:0007669"/>
    <property type="project" value="UniProtKB-SubCell"/>
</dbReference>
<dbReference type="GO" id="GO:0005179">
    <property type="term" value="F:hormone activity"/>
    <property type="evidence" value="ECO:0007669"/>
    <property type="project" value="InterPro"/>
</dbReference>
<dbReference type="GO" id="GO:0007218">
    <property type="term" value="P:neuropeptide signaling pathway"/>
    <property type="evidence" value="ECO:0007669"/>
    <property type="project" value="UniProtKB-KW"/>
</dbReference>
<dbReference type="InterPro" id="IPR003424">
    <property type="entry name" value="ELH"/>
</dbReference>
<dbReference type="Pfam" id="PF02323">
    <property type="entry name" value="ELH"/>
    <property type="match status" value="2"/>
</dbReference>
<feature type="signal peptide" evidence="5">
    <location>
        <begin position="1"/>
        <end position="21"/>
    </location>
</feature>
<feature type="propeptide" id="PRO_0000001800">
    <location>
        <begin position="22"/>
        <end position="34"/>
    </location>
</feature>
<feature type="peptide" id="PRO_0000001801" description="Atrial gland peptide A">
    <location>
        <begin position="36"/>
        <end position="69"/>
    </location>
</feature>
<feature type="propeptide" id="PRO_0000001802">
    <location>
        <begin position="73"/>
        <end position="114"/>
    </location>
</feature>
<feature type="chain" id="PRO_0000001803" description="Califin-A">
    <location>
        <begin position="117"/>
        <end position="173"/>
    </location>
</feature>
<feature type="peptide" id="PRO_0000001804" description="Califin-A large subunit">
    <location>
        <begin position="117"/>
        <end position="152"/>
    </location>
</feature>
<feature type="peptide" id="PRO_0000001805" description="Califin-A small subunit">
    <location>
        <begin position="156"/>
        <end position="173"/>
    </location>
</feature>
<feature type="region of interest" description="Disordered" evidence="1">
    <location>
        <begin position="75"/>
        <end position="94"/>
    </location>
</feature>
<feature type="modified residue" description="Isoleucine amide" evidence="2">
    <location>
        <position position="69"/>
    </location>
</feature>
<feature type="modified residue" description="Leucine amide" evidence="3">
    <location>
        <position position="152"/>
    </location>
</feature>
<feature type="disulfide bond">
    <location>
        <begin position="141"/>
        <end position="172"/>
    </location>
</feature>
<feature type="sequence conflict" description="In Ref. 2; AAA27750." evidence="4" ref="2">
    <original>CS</original>
    <variation>PQLKTISNLLD</variation>
    <location>
        <begin position="172"/>
        <end position="173"/>
    </location>
</feature>
<reference key="1">
    <citation type="journal article" date="1985" name="J. Neurosci.">
        <title>Structure and expression of the egg-laying hormone gene family in Aplysia.</title>
        <authorList>
            <person name="Mahon A.C."/>
            <person name="Nambu J.R."/>
            <person name="Taussig R."/>
            <person name="Shyamala M."/>
            <person name="Roach A."/>
            <person name="Scheller R.H."/>
        </authorList>
    </citation>
    <scope>NUCLEOTIDE SEQUENCE [GENOMIC DNA]</scope>
</reference>
<reference key="2">
    <citation type="journal article" date="1983" name="Cell">
        <title>A single gene encodes multiple neuropeptides mediating a stereotyped behavior.</title>
        <authorList>
            <person name="Scheller R.H."/>
            <person name="Jackson J.F."/>
            <person name="McAllister L.B."/>
            <person name="Rothman B.S."/>
            <person name="Mayeri E."/>
            <person name="Axel R."/>
        </authorList>
    </citation>
    <scope>NUCLEOTIDE SEQUENCE [GENOMIC DNA]</scope>
</reference>
<reference key="3">
    <citation type="journal article" date="1980" name="Proc. Natl. Acad. Sci. U.S.A.">
        <title>Purification and primary structure of two neuroactive peptides that cause bag cell afterdischarge and egg-laying in Aplysia.</title>
        <authorList>
            <person name="Heller E."/>
            <person name="Kaczmarek L.K."/>
            <person name="Hunkapiller M.W."/>
            <person name="Hood L.E."/>
            <person name="Strumwasser F."/>
        </authorList>
    </citation>
    <scope>PROTEIN SEQUENCE OF 36-69 (PEPTIDE A)</scope>
</reference>
<reference key="4">
    <citation type="journal article" date="1986" name="J. Biol. Chem.">
        <title>Isolation and primary structure of the califins, three biologically active egg-laying hormone-like peptides from the atrial gland of Aplysia californica.</title>
        <authorList>
            <person name="Rothman B.S."/>
            <person name="Hawke D.H."/>
            <person name="Brown R.O."/>
            <person name="Lee T.D."/>
            <person name="Dehghan A.A."/>
            <person name="Shively J.E."/>
            <person name="Mayeri E."/>
        </authorList>
    </citation>
    <scope>PROTEIN SEQUENCE OF 117-173 (CALIFIN A)</scope>
    <scope>AMIDATION AT LEU-152</scope>
    <source>
        <tissue>Atrial gland</tissue>
    </source>
</reference>
<reference key="5">
    <citation type="journal article" date="1988" name="J. Biol. Chem.">
        <title>Proteolytic processing of egg-laying hormone-related precursors in Aplysia. Identification of peptide regions critical for biological activity.</title>
        <authorList>
            <person name="Nagle G.T."/>
            <person name="Painter S.D."/>
            <person name="Blankenship J.E."/>
            <person name="Kurosky A."/>
        </authorList>
    </citation>
    <scope>PROTEIN SEQUENCE OF 22-34; 131-152 AND 156-173</scope>
    <scope>AMIDATION AT ILE-69</scope>
</reference>
<sequence length="173" mass="19283">MKANTMFIILCLSLSTLCVSSQSTSVHGKIFVPNRAVKLSSDGNYPFDLSKEDGAQPYFMTPRLRFYPIGKRAAGEMEQSEGQNPETKSHSWRKRSVLTPSLSSLGESLESGISKRISINQDLKAITDMLLTEQIQARRRCLDALRQRLLDLGKRDSDVSLFNGDLLPNGRCS</sequence>
<accession>P01360</accession>
<accession>P11923</accession>
<evidence type="ECO:0000256" key="1">
    <source>
        <dbReference type="SAM" id="MobiDB-lite"/>
    </source>
</evidence>
<evidence type="ECO:0000269" key="2">
    <source>
    </source>
</evidence>
<evidence type="ECO:0000269" key="3">
    <source>
    </source>
</evidence>
<evidence type="ECO:0000305" key="4"/>
<evidence type="ECO:0000305" key="5">
    <source>
    </source>
</evidence>
<comment type="function">
    <text>The atrial gland peptide A and peptide B precursors are the source of the 2 peptides that, upon release from this reproductive system gland, initiate the egg-laying process by exciting the bag cell neurons. These neurons, clustered in neural connectives near the abdominal ganglion, in turn release other peptides that act directly on the ganglion and also, via the circulating hemolymph, on many other organs to control the physiological processes of egg-laying. One of these other peptides is the egg-laying hormone.</text>
</comment>
<comment type="function">
    <text>Injected in sexually mature animals califin A excites LB and LC cells of the abdominal ganglion and causes egg-laying.</text>
</comment>
<comment type="subunit">
    <text>Califin A consists of a 36-residue large subunit bound by a single disulfide bond to a 18-residue small subunit.</text>
</comment>
<comment type="subcellular location">
    <subcellularLocation>
        <location>Secreted</location>
    </subcellularLocation>
</comment>
<comment type="similarity">
    <text evidence="4">Belongs to the molluscan ELH family.</text>
</comment>
<proteinExistence type="evidence at protein level"/>
<protein>
    <recommendedName>
        <fullName>Atrial gland and califin peptides</fullName>
    </recommendedName>
    <alternativeName>
        <fullName>ELH-18</fullName>
    </alternativeName>
    <component>
        <recommendedName>
            <fullName>Atrial gland peptide A</fullName>
        </recommendedName>
    </component>
    <component>
        <recommendedName>
            <fullName>Califin-A</fullName>
        </recommendedName>
    </component>
    <component>
        <recommendedName>
            <fullName>Califin-A large subunit</fullName>
        </recommendedName>
    </component>
    <component>
        <recommendedName>
            <fullName>Califin-A small subunit</fullName>
        </recommendedName>
    </component>
</protein>
<name>ELHA_APLCA</name>
<organism>
    <name type="scientific">Aplysia californica</name>
    <name type="common">California sea hare</name>
    <dbReference type="NCBI Taxonomy" id="6500"/>
    <lineage>
        <taxon>Eukaryota</taxon>
        <taxon>Metazoa</taxon>
        <taxon>Spiralia</taxon>
        <taxon>Lophotrochozoa</taxon>
        <taxon>Mollusca</taxon>
        <taxon>Gastropoda</taxon>
        <taxon>Heterobranchia</taxon>
        <taxon>Euthyneura</taxon>
        <taxon>Tectipleura</taxon>
        <taxon>Aplysiida</taxon>
        <taxon>Aplysioidea</taxon>
        <taxon>Aplysiidae</taxon>
        <taxon>Aplysia</taxon>
    </lineage>
</organism>